<proteinExistence type="evidence at transcript level"/>
<accession>Q56UJ5</accession>
<accession>A0MGZ4</accession>
<accession>Q503W9</accession>
<dbReference type="EC" id="2.8.2.-" evidence="2"/>
<dbReference type="EMBL" id="AY575770">
    <property type="protein sequence ID" value="AAT80869.1"/>
    <property type="status" value="ALT_INIT"/>
    <property type="molecule type" value="mRNA"/>
</dbReference>
<dbReference type="EMBL" id="BC095149">
    <property type="protein sequence ID" value="AAH95149.1"/>
    <property type="status" value="ALT_INIT"/>
    <property type="molecule type" value="mRNA"/>
</dbReference>
<dbReference type="EMBL" id="DQ812993">
    <property type="protein sequence ID" value="ABH11455.1"/>
    <property type="molecule type" value="mRNA"/>
</dbReference>
<dbReference type="RefSeq" id="NP_001018344.2">
    <property type="nucleotide sequence ID" value="NM_001020508.2"/>
</dbReference>
<dbReference type="RefSeq" id="NP_001417892.1">
    <property type="nucleotide sequence ID" value="NM_001430963.1"/>
</dbReference>
<dbReference type="SMR" id="Q56UJ5"/>
<dbReference type="FunCoup" id="Q56UJ5">
    <property type="interactions" value="1464"/>
</dbReference>
<dbReference type="STRING" id="7955.ENSDARP00000145279"/>
<dbReference type="GlyCosmos" id="Q56UJ5">
    <property type="glycosylation" value="3 sites, No reported glycans"/>
</dbReference>
<dbReference type="PaxDb" id="7955-ENSDARP00000119653"/>
<dbReference type="Ensembl" id="ENSDART00000189011">
    <property type="protein sequence ID" value="ENSDARP00000145279"/>
    <property type="gene ID" value="ENSDARG00000054754"/>
</dbReference>
<dbReference type="GeneID" id="553162"/>
<dbReference type="AGR" id="ZFIN:ZDB-GENE-050524-1"/>
<dbReference type="ZFIN" id="ZDB-GENE-050524-1">
    <property type="gene designation" value="hs6st1a"/>
</dbReference>
<dbReference type="eggNOG" id="KOG3955">
    <property type="taxonomic scope" value="Eukaryota"/>
</dbReference>
<dbReference type="InParanoid" id="Q56UJ5"/>
<dbReference type="OMA" id="NHIINKW"/>
<dbReference type="OrthoDB" id="406981at2759"/>
<dbReference type="PhylomeDB" id="Q56UJ5"/>
<dbReference type="Reactome" id="R-DRE-2022928">
    <property type="pathway name" value="HS-GAG biosynthesis"/>
</dbReference>
<dbReference type="PRO" id="PR:Q56UJ5"/>
<dbReference type="Proteomes" id="UP000000437">
    <property type="component" value="Chromosome 2"/>
</dbReference>
<dbReference type="Bgee" id="ENSDARG00000054754">
    <property type="expression patterns" value="Expressed in retina and 52 other cell types or tissues"/>
</dbReference>
<dbReference type="ExpressionAtlas" id="Q56UJ5">
    <property type="expression patterns" value="baseline"/>
</dbReference>
<dbReference type="GO" id="GO:0016020">
    <property type="term" value="C:membrane"/>
    <property type="evidence" value="ECO:0007669"/>
    <property type="project" value="UniProtKB-SubCell"/>
</dbReference>
<dbReference type="GO" id="GO:0017095">
    <property type="term" value="F:heparan sulfate 6-sulfotransferase activity"/>
    <property type="evidence" value="ECO:0000315"/>
    <property type="project" value="ZFIN"/>
</dbReference>
<dbReference type="FunFam" id="3.40.50.300:FF:000852">
    <property type="entry name" value="Heparan-sulfate 6-O-sulfotransferase"/>
    <property type="match status" value="1"/>
</dbReference>
<dbReference type="FunFam" id="3.40.50.300:FF:001933">
    <property type="entry name" value="Heparan-sulfate 6-O-sulfotransferase"/>
    <property type="match status" value="1"/>
</dbReference>
<dbReference type="Gene3D" id="3.40.50.300">
    <property type="entry name" value="P-loop containing nucleotide triphosphate hydrolases"/>
    <property type="match status" value="1"/>
</dbReference>
<dbReference type="InterPro" id="IPR010635">
    <property type="entry name" value="Heparan_SO4-6-sulfoTrfase"/>
</dbReference>
<dbReference type="InterPro" id="IPR027417">
    <property type="entry name" value="P-loop_NTPase"/>
</dbReference>
<dbReference type="InterPro" id="IPR005331">
    <property type="entry name" value="Sulfotransferase"/>
</dbReference>
<dbReference type="PANTHER" id="PTHR12812">
    <property type="entry name" value="HEPARAN SULFATE 6-O-SULFOTRANSFERASE 3"/>
    <property type="match status" value="1"/>
</dbReference>
<dbReference type="PANTHER" id="PTHR12812:SF1">
    <property type="entry name" value="HEPARAN-SULFATE 6-O-SULFOTRANSFERASE 1"/>
    <property type="match status" value="1"/>
</dbReference>
<dbReference type="Pfam" id="PF03567">
    <property type="entry name" value="Sulfotransfer_2"/>
    <property type="match status" value="1"/>
</dbReference>
<dbReference type="SUPFAM" id="SSF52540">
    <property type="entry name" value="P-loop containing nucleoside triphosphate hydrolases"/>
    <property type="match status" value="1"/>
</dbReference>
<sequence>MNLLTGRNMVERSSKFLFIVVGSVLFMLILYQYVAPGMMNFGSPHGYMLEDDADLFPTPDPHYVKKFYFPIRDLERTVDFEIKGDDVIVFLHIQKTGGTTFGRHLVQNVRLEVPCDCRPGQKKCTCYRPNRKETWLFSRFSTGWSCGLHADWTELTNCVPGVLNKKESRMKNQRKFYYITLLRDPVSRYLSEWRHVQRGATWKTSLHMCDGRTPTPEELPPCYEGTDWSGCTLQQFMDCPYNLANNRQVRMLADLSLVGCYNMSFIPEKKRAQVLLESAKKNLRDMAFFGLTEFQRKTQYLFERTFRLKFIRPFMQYNSTRAAGVDLDNDTIQRIEELNDLDMQLYDYARDLFQQRYMYKRQLERREQRLKNQPLFPFRRTSSSDSTFRDDAPESEGSRLPTEDYMNHIINRW</sequence>
<gene>
    <name evidence="2" type="primary">hs6st1a</name>
    <name type="synonym">hs6st1</name>
    <name type="ORF">zgc:110038</name>
</gene>
<name>H6S1A_DANRE</name>
<keyword id="KW-0325">Glycoprotein</keyword>
<keyword id="KW-0472">Membrane</keyword>
<keyword id="KW-1185">Reference proteome</keyword>
<keyword id="KW-0735">Signal-anchor</keyword>
<keyword id="KW-0808">Transferase</keyword>
<keyword id="KW-0812">Transmembrane</keyword>
<keyword id="KW-1133">Transmembrane helix</keyword>
<reference key="1">
    <citation type="journal article" date="2005" name="Dev. Biol.">
        <title>A unique role for 6-O sulfation modification in zebrafish vascular development.</title>
        <authorList>
            <person name="Chen E."/>
            <person name="Stringer S.E."/>
            <person name="Rusch M.A."/>
            <person name="Selleck S.B."/>
            <person name="Ekker S.C."/>
        </authorList>
    </citation>
    <scope>NUCLEOTIDE SEQUENCE [MRNA]</scope>
    <scope>FUNCTION</scope>
    <scope>DEVELOPMENTAL STAGE</scope>
    <scope>TISSUE SPECIFICITY</scope>
</reference>
<reference key="2">
    <citation type="submission" date="2004-07" db="EMBL/GenBank/DDBJ databases">
        <authorList>
            <consortium name="NIH - Zebrafish Gene Collection (ZGC) project"/>
        </authorList>
    </citation>
    <scope>NUCLEOTIDE SEQUENCE [LARGE SCALE MRNA]</scope>
    <source>
        <tissue>Larva</tissue>
    </source>
</reference>
<reference key="3">
    <citation type="journal article" date="2006" name="Dev. Dyn.">
        <title>Combinatorial expression patterns of heparan sulfate sulfotransferases in zebrafish: II. The 6-O-sulfotransferase family.</title>
        <authorList>
            <person name="Cadwallader A.B."/>
            <person name="Yost H.J."/>
        </authorList>
    </citation>
    <scope>NUCLEOTIDE SEQUENCE [MRNA] OF 9-413</scope>
    <scope>DEVELOPMENTAL STAGE</scope>
    <scope>TISSUE SPECIFICITY</scope>
</reference>
<evidence type="ECO:0000250" key="1">
    <source>
        <dbReference type="UniProtKB" id="A0MGZ7"/>
    </source>
</evidence>
<evidence type="ECO:0000250" key="2">
    <source>
        <dbReference type="UniProtKB" id="O60243"/>
    </source>
</evidence>
<evidence type="ECO:0000255" key="3"/>
<evidence type="ECO:0000256" key="4">
    <source>
        <dbReference type="SAM" id="MobiDB-lite"/>
    </source>
</evidence>
<evidence type="ECO:0000269" key="5">
    <source>
    </source>
</evidence>
<evidence type="ECO:0000269" key="6">
    <source>
    </source>
</evidence>
<evidence type="ECO:0000305" key="7"/>
<comment type="function">
    <text evidence="5">6-O-sulfation enzyme which catalyzes the transfer of sulfate from 3'-phosphoadenosine 5'-phosphosulfate (PAPS) to position 6 of the N-sulfoglucosamine residue (GlcNS) of heparan sulfate.</text>
</comment>
<comment type="catalytic activity">
    <reaction evidence="2">
        <text>alpha-D-glucosaminyl-[heparan sulfate](n) + 3'-phosphoadenylyl sulfate = 6-sulfo-alpha-D-glucosaminyl-[heparan sulfate](n) + adenosine 3',5'-bisphosphate + H(+)</text>
        <dbReference type="Rhea" id="RHEA:56604"/>
        <dbReference type="Rhea" id="RHEA-COMP:9830"/>
        <dbReference type="Rhea" id="RHEA-COMP:14621"/>
        <dbReference type="ChEBI" id="CHEBI:15378"/>
        <dbReference type="ChEBI" id="CHEBI:58339"/>
        <dbReference type="ChEBI" id="CHEBI:58343"/>
        <dbReference type="ChEBI" id="CHEBI:58388"/>
        <dbReference type="ChEBI" id="CHEBI:140604"/>
    </reaction>
</comment>
<comment type="subcellular location">
    <subcellularLocation>
        <location evidence="7">Membrane</location>
        <topology evidence="7">Single-pass type II membrane protein</topology>
    </subcellularLocation>
</comment>
<comment type="tissue specificity">
    <text evidence="5 6">During somitogenesis, first expressed in polster and presumptive forebrain. During mid-somitogenesis, expressed in eye, hindbrain and anterior spinal cord. During late somitogenesis, strong expression in eye and hindbrain, decreased levels in midbrain and anterior spinal cord. At 24 hours post-fertilization (hpf), expressed in neural retina and lens, brain and anterior spinal cord. At 36 hpf, retinal expression is confined to the ciliary marginal zone and there is strong expression in tectum, rhombomeres and otic vesicle. At 48 hpf, expressed in retinal ganglion cells and in tectum, rhombomeres and pectoral fin. Not detected in the vasculature during embryogenesis.</text>
</comment>
<comment type="developmental stage">
    <text evidence="5 6">Expressed both maternally and zygotically. Expression is lost before gastrulation and begins again during somitogenesis.</text>
</comment>
<comment type="similarity">
    <text evidence="7">Belongs to the sulfotransferase 6 family.</text>
</comment>
<comment type="sequence caution" evidence="7">
    <conflict type="erroneous initiation">
        <sequence resource="EMBL-CDS" id="AAH95149"/>
    </conflict>
</comment>
<comment type="sequence caution" evidence="7">
    <conflict type="erroneous initiation">
        <sequence resource="EMBL-CDS" id="AAT80869"/>
    </conflict>
</comment>
<protein>
    <recommendedName>
        <fullName evidence="2">Heparan-sulfate 6-O-sulfotransferase 1-A</fullName>
        <shortName>HS 6-OST-1A</shortName>
        <shortName>HS6ST-1</shortName>
        <ecNumber evidence="2">2.8.2.-</ecNumber>
    </recommendedName>
</protein>
<feature type="chain" id="PRO_0000190804" description="Heparan-sulfate 6-O-sulfotransferase 1-A">
    <location>
        <begin position="1"/>
        <end position="413"/>
    </location>
</feature>
<feature type="topological domain" description="Cytoplasmic" evidence="3">
    <location>
        <begin position="9"/>
        <end position="15"/>
    </location>
</feature>
<feature type="transmembrane region" description="Helical; Signal-anchor for type II membrane protein" evidence="3">
    <location>
        <begin position="16"/>
        <end position="36"/>
    </location>
</feature>
<feature type="topological domain" description="Lumenal" evidence="3">
    <location>
        <begin position="37"/>
        <end position="413"/>
    </location>
</feature>
<feature type="region of interest" description="Disordered" evidence="4">
    <location>
        <begin position="374"/>
        <end position="401"/>
    </location>
</feature>
<feature type="active site" description="Proton acceptor" evidence="1">
    <location>
        <position position="149"/>
    </location>
</feature>
<feature type="binding site" evidence="1">
    <location>
        <begin position="92"/>
        <end position="100"/>
    </location>
    <ligand>
        <name>3'-phosphoadenylyl sulfate</name>
        <dbReference type="ChEBI" id="CHEBI:58339"/>
    </ligand>
</feature>
<feature type="binding site" evidence="1">
    <location>
        <begin position="122"/>
        <end position="123"/>
    </location>
    <ligand>
        <name>substrate</name>
    </ligand>
</feature>
<feature type="binding site" evidence="1">
    <location>
        <position position="139"/>
    </location>
    <ligand>
        <name>substrate</name>
    </ligand>
</feature>
<feature type="binding site" evidence="1">
    <location>
        <position position="144"/>
    </location>
    <ligand>
        <name>substrate</name>
    </ligand>
</feature>
<feature type="binding site" evidence="1">
    <location>
        <position position="149"/>
    </location>
    <ligand>
        <name>substrate</name>
    </ligand>
</feature>
<feature type="binding site" evidence="1">
    <location>
        <position position="183"/>
    </location>
    <ligand>
        <name>3'-phosphoadenylyl sulfate</name>
        <dbReference type="ChEBI" id="CHEBI:58339"/>
    </ligand>
</feature>
<feature type="binding site" evidence="1">
    <location>
        <position position="191"/>
    </location>
    <ligand>
        <name>3'-phosphoadenylyl sulfate</name>
        <dbReference type="ChEBI" id="CHEBI:58339"/>
    </ligand>
</feature>
<feature type="binding site" evidence="1">
    <location>
        <position position="195"/>
    </location>
    <ligand>
        <name>substrate</name>
    </ligand>
</feature>
<feature type="binding site" evidence="1">
    <location>
        <position position="202"/>
    </location>
    <ligand>
        <name>substrate</name>
    </ligand>
</feature>
<feature type="binding site" evidence="1">
    <location>
        <begin position="315"/>
        <end position="317"/>
    </location>
    <ligand>
        <name>3'-phosphoadenylyl sulfate</name>
        <dbReference type="ChEBI" id="CHEBI:58339"/>
    </ligand>
</feature>
<feature type="binding site" evidence="1">
    <location>
        <begin position="321"/>
        <end position="322"/>
    </location>
    <ligand>
        <name>3'-phosphoadenylyl sulfate</name>
        <dbReference type="ChEBI" id="CHEBI:58339"/>
    </ligand>
</feature>
<feature type="glycosylation site" description="N-linked (GlcNAc...) asparagine" evidence="3">
    <location>
        <position position="262"/>
    </location>
</feature>
<feature type="glycosylation site" description="N-linked (GlcNAc...) asparagine" evidence="3">
    <location>
        <position position="318"/>
    </location>
</feature>
<feature type="glycosylation site" description="N-linked (GlcNAc...) asparagine" evidence="3">
    <location>
        <position position="329"/>
    </location>
</feature>
<feature type="sequence conflict" description="In Ref. 2; AAH95149." evidence="7" ref="2">
    <original>V</original>
    <variation>A</variation>
    <location>
        <position position="20"/>
    </location>
</feature>
<feature type="sequence conflict" description="In Ref. 3; ABH11455 and 2; AAH95149." evidence="7" ref="3 2">
    <original>D</original>
    <variation>H</variation>
    <location>
        <position position="79"/>
    </location>
</feature>
<feature type="sequence conflict" description="In Ref. 3; ABH11455 and 2; AAH95149." evidence="7" ref="3 2">
    <original>R</original>
    <variation>H</variation>
    <location>
        <position position="307"/>
    </location>
</feature>
<feature type="sequence conflict" description="In Ref. 2; AAH95149." evidence="7" ref="2">
    <original>G</original>
    <variation>D</variation>
    <location>
        <position position="324"/>
    </location>
</feature>
<organism>
    <name type="scientific">Danio rerio</name>
    <name type="common">Zebrafish</name>
    <name type="synonym">Brachydanio rerio</name>
    <dbReference type="NCBI Taxonomy" id="7955"/>
    <lineage>
        <taxon>Eukaryota</taxon>
        <taxon>Metazoa</taxon>
        <taxon>Chordata</taxon>
        <taxon>Craniata</taxon>
        <taxon>Vertebrata</taxon>
        <taxon>Euteleostomi</taxon>
        <taxon>Actinopterygii</taxon>
        <taxon>Neopterygii</taxon>
        <taxon>Teleostei</taxon>
        <taxon>Ostariophysi</taxon>
        <taxon>Cypriniformes</taxon>
        <taxon>Danionidae</taxon>
        <taxon>Danioninae</taxon>
        <taxon>Danio</taxon>
    </lineage>
</organism>